<reference key="1">
    <citation type="journal article" date="1996" name="Nat. Genet.">
        <title>A novel X-linked gene, G4.5. is responsible for Barth syndrome.</title>
        <authorList>
            <person name="Bione S."/>
            <person name="D'Adamo P."/>
            <person name="Maestrini E."/>
            <person name="Gedeon A.K."/>
            <person name="Bolhuis P.A."/>
            <person name="Toniolo D."/>
        </authorList>
    </citation>
    <scope>NUCLEOTIDE SEQUENCE [GENOMIC DNA / MRNA] (ISOFORM 1)</scope>
    <source>
        <tissue>Heart</tissue>
        <tissue>Skeletal muscle</tissue>
    </source>
</reference>
<reference key="2">
    <citation type="submission" date="2003-02" db="EMBL/GenBank/DDBJ databases">
        <title>Identification and characterization of human tafazzins.</title>
        <authorList>
            <person name="Lu B."/>
            <person name="Gong Y."/>
            <person name="Hatch G.M."/>
            <person name="Choy P.C."/>
        </authorList>
    </citation>
    <scope>NUCLEOTIDE SEQUENCE [MRNA] (ISOFORMS 1; 2; 3; 5; 6; 7; 8 AND 9)</scope>
</reference>
<reference key="3">
    <citation type="journal article" date="2004" name="Nat. Genet.">
        <title>Complete sequencing and characterization of 21,243 full-length human cDNAs.</title>
        <authorList>
            <person name="Ota T."/>
            <person name="Suzuki Y."/>
            <person name="Nishikawa T."/>
            <person name="Otsuki T."/>
            <person name="Sugiyama T."/>
            <person name="Irie R."/>
            <person name="Wakamatsu A."/>
            <person name="Hayashi K."/>
            <person name="Sato H."/>
            <person name="Nagai K."/>
            <person name="Kimura K."/>
            <person name="Makita H."/>
            <person name="Sekine M."/>
            <person name="Obayashi M."/>
            <person name="Nishi T."/>
            <person name="Shibahara T."/>
            <person name="Tanaka T."/>
            <person name="Ishii S."/>
            <person name="Yamamoto J."/>
            <person name="Saito K."/>
            <person name="Kawai Y."/>
            <person name="Isono Y."/>
            <person name="Nakamura Y."/>
            <person name="Nagahari K."/>
            <person name="Murakami K."/>
            <person name="Yasuda T."/>
            <person name="Iwayanagi T."/>
            <person name="Wagatsuma M."/>
            <person name="Shiratori A."/>
            <person name="Sudo H."/>
            <person name="Hosoiri T."/>
            <person name="Kaku Y."/>
            <person name="Kodaira H."/>
            <person name="Kondo H."/>
            <person name="Sugawara M."/>
            <person name="Takahashi M."/>
            <person name="Kanda K."/>
            <person name="Yokoi T."/>
            <person name="Furuya T."/>
            <person name="Kikkawa E."/>
            <person name="Omura Y."/>
            <person name="Abe K."/>
            <person name="Kamihara K."/>
            <person name="Katsuta N."/>
            <person name="Sato K."/>
            <person name="Tanikawa M."/>
            <person name="Yamazaki M."/>
            <person name="Ninomiya K."/>
            <person name="Ishibashi T."/>
            <person name="Yamashita H."/>
            <person name="Murakawa K."/>
            <person name="Fujimori K."/>
            <person name="Tanai H."/>
            <person name="Kimata M."/>
            <person name="Watanabe M."/>
            <person name="Hiraoka S."/>
            <person name="Chiba Y."/>
            <person name="Ishida S."/>
            <person name="Ono Y."/>
            <person name="Takiguchi S."/>
            <person name="Watanabe S."/>
            <person name="Yosida M."/>
            <person name="Hotuta T."/>
            <person name="Kusano J."/>
            <person name="Kanehori K."/>
            <person name="Takahashi-Fujii A."/>
            <person name="Hara H."/>
            <person name="Tanase T.-O."/>
            <person name="Nomura Y."/>
            <person name="Togiya S."/>
            <person name="Komai F."/>
            <person name="Hara R."/>
            <person name="Takeuchi K."/>
            <person name="Arita M."/>
            <person name="Imose N."/>
            <person name="Musashino K."/>
            <person name="Yuuki H."/>
            <person name="Oshima A."/>
            <person name="Sasaki N."/>
            <person name="Aotsuka S."/>
            <person name="Yoshikawa Y."/>
            <person name="Matsunawa H."/>
            <person name="Ichihara T."/>
            <person name="Shiohata N."/>
            <person name="Sano S."/>
            <person name="Moriya S."/>
            <person name="Momiyama H."/>
            <person name="Satoh N."/>
            <person name="Takami S."/>
            <person name="Terashima Y."/>
            <person name="Suzuki O."/>
            <person name="Nakagawa S."/>
            <person name="Senoh A."/>
            <person name="Mizoguchi H."/>
            <person name="Goto Y."/>
            <person name="Shimizu F."/>
            <person name="Wakebe H."/>
            <person name="Hishigaki H."/>
            <person name="Watanabe T."/>
            <person name="Sugiyama A."/>
            <person name="Takemoto M."/>
            <person name="Kawakami B."/>
            <person name="Yamazaki M."/>
            <person name="Watanabe K."/>
            <person name="Kumagai A."/>
            <person name="Itakura S."/>
            <person name="Fukuzumi Y."/>
            <person name="Fujimori Y."/>
            <person name="Komiyama M."/>
            <person name="Tashiro H."/>
            <person name="Tanigami A."/>
            <person name="Fujiwara T."/>
            <person name="Ono T."/>
            <person name="Yamada K."/>
            <person name="Fujii Y."/>
            <person name="Ozaki K."/>
            <person name="Hirao M."/>
            <person name="Ohmori Y."/>
            <person name="Kawabata A."/>
            <person name="Hikiji T."/>
            <person name="Kobatake N."/>
            <person name="Inagaki H."/>
            <person name="Ikema Y."/>
            <person name="Okamoto S."/>
            <person name="Okitani R."/>
            <person name="Kawakami T."/>
            <person name="Noguchi S."/>
            <person name="Itoh T."/>
            <person name="Shigeta K."/>
            <person name="Senba T."/>
            <person name="Matsumura K."/>
            <person name="Nakajima Y."/>
            <person name="Mizuno T."/>
            <person name="Morinaga M."/>
            <person name="Sasaki M."/>
            <person name="Togashi T."/>
            <person name="Oyama M."/>
            <person name="Hata H."/>
            <person name="Watanabe M."/>
            <person name="Komatsu T."/>
            <person name="Mizushima-Sugano J."/>
            <person name="Satoh T."/>
            <person name="Shirai Y."/>
            <person name="Takahashi Y."/>
            <person name="Nakagawa K."/>
            <person name="Okumura K."/>
            <person name="Nagase T."/>
            <person name="Nomura N."/>
            <person name="Kikuchi H."/>
            <person name="Masuho Y."/>
            <person name="Yamashita R."/>
            <person name="Nakai K."/>
            <person name="Yada T."/>
            <person name="Nakamura Y."/>
            <person name="Ohara O."/>
            <person name="Isogai T."/>
            <person name="Sugano S."/>
        </authorList>
    </citation>
    <scope>NUCLEOTIDE SEQUENCE [LARGE SCALE MRNA] (ISOFORM 1)</scope>
</reference>
<reference key="4">
    <citation type="journal article" date="2005" name="Nature">
        <title>The DNA sequence of the human X chromosome.</title>
        <authorList>
            <person name="Ross M.T."/>
            <person name="Grafham D.V."/>
            <person name="Coffey A.J."/>
            <person name="Scherer S."/>
            <person name="McLay K."/>
            <person name="Muzny D."/>
            <person name="Platzer M."/>
            <person name="Howell G.R."/>
            <person name="Burrows C."/>
            <person name="Bird C.P."/>
            <person name="Frankish A."/>
            <person name="Lovell F.L."/>
            <person name="Howe K.L."/>
            <person name="Ashurst J.L."/>
            <person name="Fulton R.S."/>
            <person name="Sudbrak R."/>
            <person name="Wen G."/>
            <person name="Jones M.C."/>
            <person name="Hurles M.E."/>
            <person name="Andrews T.D."/>
            <person name="Scott C.E."/>
            <person name="Searle S."/>
            <person name="Ramser J."/>
            <person name="Whittaker A."/>
            <person name="Deadman R."/>
            <person name="Carter N.P."/>
            <person name="Hunt S.E."/>
            <person name="Chen R."/>
            <person name="Cree A."/>
            <person name="Gunaratne P."/>
            <person name="Havlak P."/>
            <person name="Hodgson A."/>
            <person name="Metzker M.L."/>
            <person name="Richards S."/>
            <person name="Scott G."/>
            <person name="Steffen D."/>
            <person name="Sodergren E."/>
            <person name="Wheeler D.A."/>
            <person name="Worley K.C."/>
            <person name="Ainscough R."/>
            <person name="Ambrose K.D."/>
            <person name="Ansari-Lari M.A."/>
            <person name="Aradhya S."/>
            <person name="Ashwell R.I."/>
            <person name="Babbage A.K."/>
            <person name="Bagguley C.L."/>
            <person name="Ballabio A."/>
            <person name="Banerjee R."/>
            <person name="Barker G.E."/>
            <person name="Barlow K.F."/>
            <person name="Barrett I.P."/>
            <person name="Bates K.N."/>
            <person name="Beare D.M."/>
            <person name="Beasley H."/>
            <person name="Beasley O."/>
            <person name="Beck A."/>
            <person name="Bethel G."/>
            <person name="Blechschmidt K."/>
            <person name="Brady N."/>
            <person name="Bray-Allen S."/>
            <person name="Bridgeman A.M."/>
            <person name="Brown A.J."/>
            <person name="Brown M.J."/>
            <person name="Bonnin D."/>
            <person name="Bruford E.A."/>
            <person name="Buhay C."/>
            <person name="Burch P."/>
            <person name="Burford D."/>
            <person name="Burgess J."/>
            <person name="Burrill W."/>
            <person name="Burton J."/>
            <person name="Bye J.M."/>
            <person name="Carder C."/>
            <person name="Carrel L."/>
            <person name="Chako J."/>
            <person name="Chapman J.C."/>
            <person name="Chavez D."/>
            <person name="Chen E."/>
            <person name="Chen G."/>
            <person name="Chen Y."/>
            <person name="Chen Z."/>
            <person name="Chinault C."/>
            <person name="Ciccodicola A."/>
            <person name="Clark S.Y."/>
            <person name="Clarke G."/>
            <person name="Clee C.M."/>
            <person name="Clegg S."/>
            <person name="Clerc-Blankenburg K."/>
            <person name="Clifford K."/>
            <person name="Cobley V."/>
            <person name="Cole C.G."/>
            <person name="Conquer J.S."/>
            <person name="Corby N."/>
            <person name="Connor R.E."/>
            <person name="David R."/>
            <person name="Davies J."/>
            <person name="Davis C."/>
            <person name="Davis J."/>
            <person name="Delgado O."/>
            <person name="Deshazo D."/>
            <person name="Dhami P."/>
            <person name="Ding Y."/>
            <person name="Dinh H."/>
            <person name="Dodsworth S."/>
            <person name="Draper H."/>
            <person name="Dugan-Rocha S."/>
            <person name="Dunham A."/>
            <person name="Dunn M."/>
            <person name="Durbin K.J."/>
            <person name="Dutta I."/>
            <person name="Eades T."/>
            <person name="Ellwood M."/>
            <person name="Emery-Cohen A."/>
            <person name="Errington H."/>
            <person name="Evans K.L."/>
            <person name="Faulkner L."/>
            <person name="Francis F."/>
            <person name="Frankland J."/>
            <person name="Fraser A.E."/>
            <person name="Galgoczy P."/>
            <person name="Gilbert J."/>
            <person name="Gill R."/>
            <person name="Gloeckner G."/>
            <person name="Gregory S.G."/>
            <person name="Gribble S."/>
            <person name="Griffiths C."/>
            <person name="Grocock R."/>
            <person name="Gu Y."/>
            <person name="Gwilliam R."/>
            <person name="Hamilton C."/>
            <person name="Hart E.A."/>
            <person name="Hawes A."/>
            <person name="Heath P.D."/>
            <person name="Heitmann K."/>
            <person name="Hennig S."/>
            <person name="Hernandez J."/>
            <person name="Hinzmann B."/>
            <person name="Ho S."/>
            <person name="Hoffs M."/>
            <person name="Howden P.J."/>
            <person name="Huckle E.J."/>
            <person name="Hume J."/>
            <person name="Hunt P.J."/>
            <person name="Hunt A.R."/>
            <person name="Isherwood J."/>
            <person name="Jacob L."/>
            <person name="Johnson D."/>
            <person name="Jones S."/>
            <person name="de Jong P.J."/>
            <person name="Joseph S.S."/>
            <person name="Keenan S."/>
            <person name="Kelly S."/>
            <person name="Kershaw J.K."/>
            <person name="Khan Z."/>
            <person name="Kioschis P."/>
            <person name="Klages S."/>
            <person name="Knights A.J."/>
            <person name="Kosiura A."/>
            <person name="Kovar-Smith C."/>
            <person name="Laird G.K."/>
            <person name="Langford C."/>
            <person name="Lawlor S."/>
            <person name="Leversha M."/>
            <person name="Lewis L."/>
            <person name="Liu W."/>
            <person name="Lloyd C."/>
            <person name="Lloyd D.M."/>
            <person name="Loulseged H."/>
            <person name="Loveland J.E."/>
            <person name="Lovell J.D."/>
            <person name="Lozado R."/>
            <person name="Lu J."/>
            <person name="Lyne R."/>
            <person name="Ma J."/>
            <person name="Maheshwari M."/>
            <person name="Matthews L.H."/>
            <person name="McDowall J."/>
            <person name="McLaren S."/>
            <person name="McMurray A."/>
            <person name="Meidl P."/>
            <person name="Meitinger T."/>
            <person name="Milne S."/>
            <person name="Miner G."/>
            <person name="Mistry S.L."/>
            <person name="Morgan M."/>
            <person name="Morris S."/>
            <person name="Mueller I."/>
            <person name="Mullikin J.C."/>
            <person name="Nguyen N."/>
            <person name="Nordsiek G."/>
            <person name="Nyakatura G."/>
            <person name="O'dell C.N."/>
            <person name="Okwuonu G."/>
            <person name="Palmer S."/>
            <person name="Pandian R."/>
            <person name="Parker D."/>
            <person name="Parrish J."/>
            <person name="Pasternak S."/>
            <person name="Patel D."/>
            <person name="Pearce A.V."/>
            <person name="Pearson D.M."/>
            <person name="Pelan S.E."/>
            <person name="Perez L."/>
            <person name="Porter K.M."/>
            <person name="Ramsey Y."/>
            <person name="Reichwald K."/>
            <person name="Rhodes S."/>
            <person name="Ridler K.A."/>
            <person name="Schlessinger D."/>
            <person name="Schueler M.G."/>
            <person name="Sehra H.K."/>
            <person name="Shaw-Smith C."/>
            <person name="Shen H."/>
            <person name="Sheridan E.M."/>
            <person name="Shownkeen R."/>
            <person name="Skuce C.D."/>
            <person name="Smith M.L."/>
            <person name="Sotheran E.C."/>
            <person name="Steingruber H.E."/>
            <person name="Steward C.A."/>
            <person name="Storey R."/>
            <person name="Swann R.M."/>
            <person name="Swarbreck D."/>
            <person name="Tabor P.E."/>
            <person name="Taudien S."/>
            <person name="Taylor T."/>
            <person name="Teague B."/>
            <person name="Thomas K."/>
            <person name="Thorpe A."/>
            <person name="Timms K."/>
            <person name="Tracey A."/>
            <person name="Trevanion S."/>
            <person name="Tromans A.C."/>
            <person name="d'Urso M."/>
            <person name="Verduzco D."/>
            <person name="Villasana D."/>
            <person name="Waldron L."/>
            <person name="Wall M."/>
            <person name="Wang Q."/>
            <person name="Warren J."/>
            <person name="Warry G.L."/>
            <person name="Wei X."/>
            <person name="West A."/>
            <person name="Whitehead S.L."/>
            <person name="Whiteley M.N."/>
            <person name="Wilkinson J.E."/>
            <person name="Willey D.L."/>
            <person name="Williams G."/>
            <person name="Williams L."/>
            <person name="Williamson A."/>
            <person name="Williamson H."/>
            <person name="Wilming L."/>
            <person name="Woodmansey R.L."/>
            <person name="Wray P.W."/>
            <person name="Yen J."/>
            <person name="Zhang J."/>
            <person name="Zhou J."/>
            <person name="Zoghbi H."/>
            <person name="Zorilla S."/>
            <person name="Buck D."/>
            <person name="Reinhardt R."/>
            <person name="Poustka A."/>
            <person name="Rosenthal A."/>
            <person name="Lehrach H."/>
            <person name="Meindl A."/>
            <person name="Minx P.J."/>
            <person name="Hillier L.W."/>
            <person name="Willard H.F."/>
            <person name="Wilson R.K."/>
            <person name="Waterston R.H."/>
            <person name="Rice C.M."/>
            <person name="Vaudin M."/>
            <person name="Coulson A."/>
            <person name="Nelson D.L."/>
            <person name="Weinstock G."/>
            <person name="Sulston J.E."/>
            <person name="Durbin R.M."/>
            <person name="Hubbard T."/>
            <person name="Gibbs R.A."/>
            <person name="Beck S."/>
            <person name="Rogers J."/>
            <person name="Bentley D.R."/>
        </authorList>
    </citation>
    <scope>NUCLEOTIDE SEQUENCE [LARGE SCALE GENOMIC DNA]</scope>
</reference>
<reference key="5">
    <citation type="submission" date="2005-09" db="EMBL/GenBank/DDBJ databases">
        <authorList>
            <person name="Mural R.J."/>
            <person name="Istrail S."/>
            <person name="Sutton G.G."/>
            <person name="Florea L."/>
            <person name="Halpern A.L."/>
            <person name="Mobarry C.M."/>
            <person name="Lippert R."/>
            <person name="Walenz B."/>
            <person name="Shatkay H."/>
            <person name="Dew I."/>
            <person name="Miller J.R."/>
            <person name="Flanigan M.J."/>
            <person name="Edwards N.J."/>
            <person name="Bolanos R."/>
            <person name="Fasulo D."/>
            <person name="Halldorsson B.V."/>
            <person name="Hannenhalli S."/>
            <person name="Turner R."/>
            <person name="Yooseph S."/>
            <person name="Lu F."/>
            <person name="Nusskern D.R."/>
            <person name="Shue B.C."/>
            <person name="Zheng X.H."/>
            <person name="Zhong F."/>
            <person name="Delcher A.L."/>
            <person name="Huson D.H."/>
            <person name="Kravitz S.A."/>
            <person name="Mouchard L."/>
            <person name="Reinert K."/>
            <person name="Remington K.A."/>
            <person name="Clark A.G."/>
            <person name="Waterman M.S."/>
            <person name="Eichler E.E."/>
            <person name="Adams M.D."/>
            <person name="Hunkapiller M.W."/>
            <person name="Myers E.W."/>
            <person name="Venter J.C."/>
        </authorList>
    </citation>
    <scope>NUCLEOTIDE SEQUENCE [LARGE SCALE GENOMIC DNA]</scope>
</reference>
<reference key="6">
    <citation type="journal article" date="2003" name="J. Biol. Chem.">
        <title>Only one splice variant of the human TAZ gene encodes a functional protein with a role in cardiolipin metabolism.</title>
        <authorList>
            <person name="Vaz F.M."/>
            <person name="Houtkooper R.H."/>
            <person name="Valianpour F."/>
            <person name="Barth P.G."/>
            <person name="Wanders R.J."/>
        </authorList>
    </citation>
    <scope>FUNCTION (ISOFORMS 1; 3 AND 5)</scope>
    <scope>CATALYTIC ACTIVITY (ISOFORMS 1 AND 3)</scope>
    <scope>PATHWAY</scope>
</reference>
<reference key="7">
    <citation type="journal article" date="2004" name="Biochem. Cell Biol.">
        <title>Complex expression pattern of the Barth syndrome gene product tafazzin in human cell lines and murine tissues.</title>
        <authorList>
            <person name="Lu B."/>
            <person name="Kelher M.R."/>
            <person name="Lee D.P."/>
            <person name="Lewin T.M."/>
            <person name="Coleman R.A."/>
            <person name="Choy P.C."/>
            <person name="Hatch G.M."/>
        </authorList>
    </citation>
    <scope>ALTERNATIVE SPLICING (ISOFORMS 1; 3; 5 AND 7)</scope>
</reference>
<reference key="8">
    <citation type="journal article" date="2009" name="Biochim. Biophys. Acta">
        <title>Formation of molecular species of mitochondrial cardiolipin. 1. A novel transacylation mechanism to shuttle fatty acids between sn-1 and sn-2 positions of multiple phospholipid species.</title>
        <authorList>
            <person name="Malhotra A."/>
            <person name="Xu Y."/>
            <person name="Ren M."/>
            <person name="Schlame M."/>
        </authorList>
    </citation>
    <scope>FUNCTION (ISOFORM 3)</scope>
    <scope>CATALYTIC ACTIVITY (ISOFORM 3)</scope>
</reference>
<reference key="9">
    <citation type="journal article" date="2009" name="J. Biol. Chem.">
        <title>Characterization of tafazzin splice variants from humans and fruit flies.</title>
        <authorList>
            <person name="Xu Y."/>
            <person name="Zhang S."/>
            <person name="Malhotra A."/>
            <person name="Edelman-Novemsky I."/>
            <person name="Ma J."/>
            <person name="Kruppa A."/>
            <person name="Cernicica C."/>
            <person name="Blais S."/>
            <person name="Neubert T.A."/>
            <person name="Ren M."/>
            <person name="Schlame M."/>
        </authorList>
    </citation>
    <scope>FUNCTION (ISOFORMS 1; 3; 5 AND 7)</scope>
    <scope>SUBUNIT</scope>
    <scope>CATALYTIC ACTIVITY (ISOFORMS 1 AND 3)</scope>
    <scope>SUBCELLULAR LOCATION (ISOFORMS 1; 3; 5 AND 7)</scope>
    <scope>PATHWAY</scope>
</reference>
<reference key="10">
    <citation type="journal article" date="2009" name="Proc. Natl. Acad. Sci. U.S.A.">
        <title>Role of calcium-independent phospholipase A2 in the pathogenesis of Barth syndrome.</title>
        <authorList>
            <person name="Malhotra A."/>
            <person name="Edelman-Novemsky I."/>
            <person name="Xu Y."/>
            <person name="Plesken H."/>
            <person name="Ma J."/>
            <person name="Schlame M."/>
            <person name="Ren M."/>
        </authorList>
    </citation>
    <scope>FUNCTION</scope>
</reference>
<reference key="11">
    <citation type="journal article" date="2015" name="Mitochondrion">
        <title>Tafazzins from Drosophila and mammalian cells assemble in large protein complexes with a short half-life.</title>
        <authorList>
            <person name="Xu Y."/>
            <person name="Malhotra A."/>
            <person name="Claypool S.M."/>
            <person name="Ren M."/>
            <person name="Schlame M."/>
        </authorList>
    </citation>
    <scope>SUBUNIT</scope>
</reference>
<reference key="12">
    <citation type="journal article" date="2016" name="Hum. Mol. Genet.">
        <title>Defining functional classes of Barth syndrome mutation in humans.</title>
        <authorList>
            <person name="Lu Y.W."/>
            <person name="Galbraith L."/>
            <person name="Herndon J.D."/>
            <person name="Lu Y.L."/>
            <person name="Pras-Raves M."/>
            <person name="Vervaart M."/>
            <person name="Van Kampen A."/>
            <person name="Luyf A."/>
            <person name="Koehler C.M."/>
            <person name="McCaffery J.M."/>
            <person name="Gottlieb E."/>
            <person name="Vaz F.M."/>
            <person name="Claypool S.M."/>
        </authorList>
    </citation>
    <scope>FUNCTION</scope>
    <scope>SUBUNIT</scope>
    <scope>SUBCELLULAR LOCATION</scope>
    <scope>CHARACTERIZATION OF VARIANTS BTHS LEU-57 AND GLN-69</scope>
</reference>
<reference key="13">
    <citation type="journal article" date="2018" name="J. Mol. Cell. Cardiol.">
        <title>Identification of novel mitochondrial localization signals in human Tafazzin, the cause of the inherited cardiomyopathic disorder Barth syndrome.</title>
        <authorList>
            <person name="Dinca A.A."/>
            <person name="Chien W.M."/>
            <person name="Chin M.T."/>
        </authorList>
    </citation>
    <scope>SUBCELLULAR LOCATION (ISOFORMS 1 AND 3)</scope>
    <scope>MITOCHONDRIAL TARGETING SEQUENCES</scope>
    <scope>CHARACTERIZATION OF VARIANTS BTHS SER-94; ARG-167; ASN-179; ARG-180; PRO-182 AND ARG-184</scope>
</reference>
<reference key="14">
    <citation type="journal article" date="2020" name="J. Mol. Biol.">
        <title>The Function of Tafazzin, a Mitochondrial Phospholipid-Lysophospholipid Acyltransferase.</title>
        <authorList>
            <person name="Schlame M."/>
            <person name="Xu Y."/>
        </authorList>
    </citation>
    <scope>FUNCTION</scope>
</reference>
<reference key="15">
    <citation type="journal article" date="2020" name="Cells">
        <title>Tafazzin Mutation Affecting Cardiolipin Leads to Increased Mitochondrial Superoxide Anions and Mitophagy Inhibition in Barth Syndrome.</title>
        <authorList>
            <person name="Petit P.X."/>
            <person name="Ardilla-Osorio H."/>
            <person name="Penalvia L."/>
            <person name="Rainey N.E."/>
        </authorList>
    </citation>
    <scope>FUNCTION</scope>
</reference>
<reference key="16">
    <citation type="journal article" date="2015" name="Meta Gene">
        <title>Structural and functional analyses of Barth syndrome-causing mutations and alternative splicing in the tafazzin acyltransferase domain.</title>
        <authorList>
            <person name="Hijikata A."/>
            <person name="Yura K."/>
            <person name="Ohara O."/>
            <person name="Go M."/>
        </authorList>
    </citation>
    <scope>3D-STRUCTURE MODELING</scope>
</reference>
<reference key="17">
    <citation type="journal article" date="1997" name="Am. J. Hum. Genet.">
        <title>The X-linked gene G4.5 is responsible for different infantile dilated cardiomyopathies.</title>
        <authorList>
            <person name="D'Adamo P."/>
            <person name="Fassone L."/>
            <person name="Gedeon A."/>
            <person name="Janssen E.A."/>
            <person name="Bione S."/>
            <person name="Bolhuis P.A."/>
            <person name="Barth P.G."/>
            <person name="Wilson M."/>
            <person name="Haan E."/>
            <person name="Orstavik K.H."/>
            <person name="Patton M.A."/>
            <person name="Green A.J."/>
            <person name="Zammarchi E."/>
            <person name="Donati M.A."/>
            <person name="Toniolo D."/>
        </authorList>
    </citation>
    <scope>VARIANT BTHS ARG-210</scope>
</reference>
<reference key="18">
    <citation type="journal article" date="1997" name="Am. J. Hum. Genet.">
        <title>Neonatal, lethal noncompaction of the left ventricular myocardium is allelic with Barth syndrome.</title>
        <authorList>
            <person name="Bleyl S.B."/>
            <person name="Mumford B.R."/>
            <person name="Thompson V."/>
            <person name="Carey J.C."/>
            <person name="Pysher T.J."/>
            <person name="Chin T.K."/>
            <person name="Ward K."/>
        </authorList>
    </citation>
    <scope>VARIANT BTHS ARG-167</scope>
</reference>
<reference key="19">
    <citation type="journal article" date="2001" name="Circulation">
        <title>Novel gene mutations in patients with left ventricular noncompaction or Barth syndrome.</title>
        <authorList>
            <person name="Ichida F."/>
            <person name="Tsubata S."/>
            <person name="Bowles K.R."/>
            <person name="Haneda N."/>
            <person name="Uese K."/>
            <person name="Miyawaki T."/>
            <person name="Dreyer W.J."/>
            <person name="Messina J."/>
            <person name="Li H."/>
            <person name="Bowles N.E."/>
            <person name="Towbin J.A."/>
        </authorList>
    </citation>
    <scope>VARIANT BTHS ARG-118</scope>
</reference>
<reference key="20">
    <citation type="journal article" date="2002" name="J. Hum. Genet.">
        <title>Novel missense mutation (R94S) in the TAZ (G4.5) gene in a Japanese patient with Barth syndrome.</title>
        <authorList>
            <person name="Sakamoto O."/>
            <person name="Kitoh T."/>
            <person name="Ohura T."/>
            <person name="Ohya N."/>
            <person name="Iinuma K."/>
        </authorList>
    </citation>
    <scope>VARIANT BTHS SER-94</scope>
</reference>
<reference key="21">
    <citation type="journal article" date="2013" name="Orphanet J. Rare Dis.">
        <title>New clinical and molecular insights on Barth syndrome.</title>
        <authorList>
            <person name="Ferri L."/>
            <person name="Donati M.A."/>
            <person name="Funghini S."/>
            <person name="Malvagia S."/>
            <person name="Catarzi S."/>
            <person name="Lugli L."/>
            <person name="Ragni L."/>
            <person name="Bertini E."/>
            <person name="Vaz F.M."/>
            <person name="Cooper D.N."/>
            <person name="Guerrini R."/>
            <person name="Morrone A."/>
        </authorList>
    </citation>
    <scope>VARIANTS BTHS 123-ARG--ARG-292 DEL AND ARG-184</scope>
</reference>
<name>TAZ_HUMAN</name>
<protein>
    <recommendedName>
        <fullName evidence="20 21 22 24">Tafazzin</fullName>
        <shortName>Taz</shortName>
        <ecNumber evidence="10">2.3.1.-</ecNumber>
    </recommendedName>
    <alternativeName>
        <fullName evidence="25">Protein G4.5</fullName>
    </alternativeName>
</protein>
<keyword id="KW-0012">Acyltransferase</keyword>
<keyword id="KW-0025">Alternative splicing</keyword>
<keyword id="KW-0122">Cardiomyopathy</keyword>
<keyword id="KW-0963">Cytoplasm</keyword>
<keyword id="KW-0225">Disease variant</keyword>
<keyword id="KW-0443">Lipid metabolism</keyword>
<keyword id="KW-0472">Membrane</keyword>
<keyword id="KW-0496">Mitochondrion</keyword>
<keyword id="KW-0999">Mitochondrion inner membrane</keyword>
<keyword id="KW-1000">Mitochondrion outer membrane</keyword>
<keyword id="KW-1267">Proteomics identification</keyword>
<keyword id="KW-1185">Reference proteome</keyword>
<keyword id="KW-0808">Transferase</keyword>
<evidence type="ECO:0000250" key="1">
    <source>
        <dbReference type="UniProtKB" id="Q06510"/>
    </source>
</evidence>
<evidence type="ECO:0000250" key="2">
    <source>
        <dbReference type="UniProtKB" id="Q3TFD2"/>
    </source>
</evidence>
<evidence type="ECO:0000250" key="3">
    <source>
        <dbReference type="UniProtKB" id="Q91WF0"/>
    </source>
</evidence>
<evidence type="ECO:0000250" key="4">
    <source>
        <dbReference type="UniProtKB" id="Q9V6G5"/>
    </source>
</evidence>
<evidence type="ECO:0000269" key="5">
    <source>
    </source>
</evidence>
<evidence type="ECO:0000269" key="6">
    <source>
    </source>
</evidence>
<evidence type="ECO:0000269" key="7">
    <source>
    </source>
</evidence>
<evidence type="ECO:0000269" key="8">
    <source>
    </source>
</evidence>
<evidence type="ECO:0000269" key="9">
    <source>
    </source>
</evidence>
<evidence type="ECO:0000269" key="10">
    <source>
    </source>
</evidence>
<evidence type="ECO:0000269" key="11">
    <source>
    </source>
</evidence>
<evidence type="ECO:0000269" key="12">
    <source>
    </source>
</evidence>
<evidence type="ECO:0000269" key="13">
    <source>
    </source>
</evidence>
<evidence type="ECO:0000269" key="14">
    <source>
    </source>
</evidence>
<evidence type="ECO:0000269" key="15">
    <source>
    </source>
</evidence>
<evidence type="ECO:0000269" key="16">
    <source>
    </source>
</evidence>
<evidence type="ECO:0000269" key="17">
    <source>
    </source>
</evidence>
<evidence type="ECO:0000303" key="18">
    <source>
    </source>
</evidence>
<evidence type="ECO:0000303" key="19">
    <source>
    </source>
</evidence>
<evidence type="ECO:0000303" key="20">
    <source>
    </source>
</evidence>
<evidence type="ECO:0000303" key="21">
    <source>
    </source>
</evidence>
<evidence type="ECO:0000303" key="22">
    <source>
    </source>
</evidence>
<evidence type="ECO:0000303" key="23">
    <source>
    </source>
</evidence>
<evidence type="ECO:0000303" key="24">
    <source>
    </source>
</evidence>
<evidence type="ECO:0000303" key="25">
    <source>
    </source>
</evidence>
<evidence type="ECO:0000305" key="26"/>
<evidence type="ECO:0000305" key="27">
    <source>
    </source>
</evidence>
<evidence type="ECO:0000305" key="28">
    <source>
    </source>
</evidence>
<evidence type="ECO:0000305" key="29">
    <source>
    </source>
</evidence>
<evidence type="ECO:0000305" key="30">
    <source>
    </source>
</evidence>
<evidence type="ECO:0000312" key="31">
    <source>
        <dbReference type="HGNC" id="HGNC:11577"/>
    </source>
</evidence>
<accession>Q16635</accession>
<accession>A3KQT2</accession>
<accession>D3DWX2</accession>
<accession>Q5HY43</accession>
<accession>Q5HY44</accession>
<accession>Q5HY45</accession>
<accession>Q5HY48</accession>
<accession>Q86XQ6</accession>
<accession>Q86XQ7</accession>
<accession>Q86XQ8</accession>
<accession>Q86XQ9</accession>
<accession>Q86XR0</accession>
<feature type="chain" id="PRO_0000220928" description="Tafazzin">
    <location>
        <begin position="1"/>
        <end position="262"/>
    </location>
</feature>
<feature type="topological domain" description="Mitochondrial intermembrane" evidence="30">
    <location>
        <begin position="1"/>
        <end position="14"/>
    </location>
</feature>
<feature type="intramembrane region" evidence="30">
    <location>
        <begin position="15"/>
        <end position="35"/>
    </location>
</feature>
<feature type="topological domain" description="Mitochondrial intermembrane" evidence="30">
    <location>
        <begin position="36"/>
        <end position="262"/>
    </location>
</feature>
<feature type="region of interest" description="Mitochondrial targeting sequence" evidence="14">
    <location>
        <begin position="82"/>
        <end position="92"/>
    </location>
</feature>
<feature type="region of interest" description="Mitochondrial targeting sequence" evidence="14">
    <location>
        <begin position="155"/>
        <end position="190"/>
    </location>
</feature>
<feature type="short sequence motif" description="HXXXXD motif" evidence="2">
    <location>
        <begin position="69"/>
        <end position="74"/>
    </location>
</feature>
<feature type="splice variant" id="VSP_061365" description="In isoform 2, isoform 6, isoform 8 and isoform 9.">
    <location>
        <begin position="1"/>
        <end position="24"/>
    </location>
</feature>
<feature type="splice variant" id="VSP_061366" description="In isoform 1, isoform 2, isoform 5 and isoform 6.">
    <original>R</original>
    <variation>RGAEFFQAENEGKGVLDTGRHMPGAGKRREK</variation>
    <location>
        <position position="123"/>
    </location>
</feature>
<feature type="splice variant" id="VSP_061367" description="In isoform 4.">
    <original>DGVYQKGMDFILEKLNHGDWVHIFPE</original>
    <variation>AEFFQAENEGKGVLDTGRHMPGAGKRREK</variation>
    <location>
        <begin position="125"/>
        <end position="150"/>
    </location>
</feature>
<feature type="splice variant" id="VSP_061368" description="In isoform 5, isoform 6, isoform 7 and isoform 9.">
    <location>
        <begin position="151"/>
        <end position="164"/>
    </location>
</feature>
<feature type="sequence variant" id="VAR_084500" description="In BTHS; unstable protein." evidence="13">
    <original>R</original>
    <variation>L</variation>
    <location>
        <position position="57"/>
    </location>
</feature>
<feature type="sequence variant" id="VAR_084501" description="In BTHS; abolishes catalytic activity; dbSNP:rs1557191125." evidence="13">
    <original>H</original>
    <variation>Q</variation>
    <location>
        <position position="69"/>
    </location>
</feature>
<feature type="sequence variant" id="VAR_014110" description="In BTHS; does not affect mitochondrial localization; dbSNP:rs104894942." evidence="6 14">
    <original>R</original>
    <variation>S</variation>
    <location>
        <position position="94"/>
    </location>
</feature>
<feature type="sequence variant" id="VAR_014111" description="In BTHS; dbSNP:rs104894937." evidence="5">
    <original>C</original>
    <variation>R</variation>
    <location>
        <position position="118"/>
    </location>
</feature>
<feature type="sequence variant" id="VAR_084502" description="In BTHS." evidence="11">
    <location>
        <begin position="123"/>
        <end position="262"/>
    </location>
</feature>
<feature type="sequence variant" id="VAR_014112" description="In BTHS; does not affect mitochondrial localization; dbSNP:rs132630277." evidence="14 17">
    <original>G</original>
    <variation>R</variation>
    <location>
        <position position="167"/>
    </location>
</feature>
<feature type="sequence variant" id="VAR_084503" description="In BTHS; does not affect mitochondrial localization." evidence="14">
    <original>I</original>
    <variation>N</variation>
    <location>
        <position position="179"/>
    </location>
</feature>
<feature type="sequence variant" id="VAR_084504" description="In BTHS; does not affect mitochondrial localization." evidence="14">
    <original>L</original>
    <variation>R</variation>
    <location>
        <position position="180"/>
    </location>
</feature>
<feature type="sequence variant" id="VAR_084505" description="In BTHS; does not affect mitochondrial localization." evidence="14">
    <original>L</original>
    <variation>P</variation>
    <location>
        <position position="182"/>
    </location>
</feature>
<feature type="sequence variant" id="VAR_084506" description="In BTHS; does not affect mitochondrial localization." evidence="11 14">
    <original>H</original>
    <variation>R</variation>
    <location>
        <position position="184"/>
    </location>
</feature>
<feature type="sequence variant" id="VAR_068434" description="In BTHS; dbSNP:rs387907218." evidence="16">
    <original>G</original>
    <variation>R</variation>
    <location>
        <position position="210"/>
    </location>
</feature>
<organism>
    <name type="scientific">Homo sapiens</name>
    <name type="common">Human</name>
    <dbReference type="NCBI Taxonomy" id="9606"/>
    <lineage>
        <taxon>Eukaryota</taxon>
        <taxon>Metazoa</taxon>
        <taxon>Chordata</taxon>
        <taxon>Craniata</taxon>
        <taxon>Vertebrata</taxon>
        <taxon>Euteleostomi</taxon>
        <taxon>Mammalia</taxon>
        <taxon>Eutheria</taxon>
        <taxon>Euarchontoglires</taxon>
        <taxon>Primates</taxon>
        <taxon>Haplorrhini</taxon>
        <taxon>Catarrhini</taxon>
        <taxon>Hominidae</taxon>
        <taxon>Homo</taxon>
    </lineage>
</organism>
<sequence length="262" mass="30203">MPLHVKWPFPAVPPLTWTLASSVVMGLVGTYSCFWTKYMNHLTVHNREVLYELIEKRGPATPLITVSNHQSCMDDPHLWGILKLRHIWNLKLMRWTPAAADICFTKELHSHFFSLGKCVPVCRGDGVYQKGMDFILEKLNHGDWVHIFPEGKVNMSSEFLRFKWGIGRLIAECHLNPIILPLWHVGMNDVLPNSPPYFPRFGQKITVLIGKPFSALPVLERLRAENKSAVEMRKALTDFIQEEFQHLKTQAEQLHNHLQPGR</sequence>
<comment type="function">
    <text evidence="1 3 4 7 8 10 13 15 20 23">Acyltransferase required to remodel newly synthesized phospholipid cardiolipin (1',3'-bis-[1,2-diacyl-sn-glycero-3-phospho]-glycerol or CL), a key component of the mitochondrial inner membrane, with tissue specific acyl chains necessary for adequate mitochondrial function (PubMed:12930833, PubMed:19164547, PubMed:19700766, PubMed:26908608, PubMed:33096711). Its role in cellular physiology is to improve mitochondrial performance (PubMed:32234310). CL is critical for the coassembly of lipids and proteins in mitochondrial membranes, for instance, remodeling of the acyl groups of CL in the mitochondrial inner membrane affects the assembly and stability of respiratory chain complex IV and its supercomplex forms (By similarity). Catalyzes the transacylation between phospholipids and lysophospholipids, with the highest rate being between phosphatidylcholine (1,2-diacyl-sn-glycero-3-phosphocholine or PC) and CL. Catalyzes both 1-acyl-sn-glycero-3-phosphocholine (lysophosphatidylcholine or LPC) reacylation and PC-CL transacylation, that means, it exchanges acyl groups between CL and PC by a combination of forward and reverse transacylations. Also catalyzes transacylations between other phospholipids such as phosphatidylethanolamine (1,2-diacyl-sn-glycero-3-phosphoethanolamine or PE) and CL, between PC and PE, and between PC and phosphatidate (1,2-diacyl-sn-glycero-3-phosphate or PA), although at lower rate. Not regiospecific, it transfers acyl groups into any of the sn-1 and sn-2 positions of the monolysocardiolipin (MLCL), which is an important prerequisite for uniformity and symmetry in CL acyl distribution. Cannot transacylate dilysocardiolipin (DLCL), thus, the role of MLCL is limited to that of an acyl acceptor. CoA-independent, it can reshuffle molecular species within a single phospholipid class. Redistributes fatty acids between MLCL, CL, and other lipids, which prolongs the half-life of CL. Its action is completely reversible, which allows for cyclic changes, such as fission and fusion or bending and flattening of the membrane. Hence, by contributing to the flexibility of the lipid composition, it plays an important role in the dynamics of mitochondria membranes. Essential for the final stage of spermatogenesis, spermatid individualization (By similarity). Required for the initiation of mitophagy (PubMed:33096711). Required to ensure progression of spermatocytes through meiosis (By similarity). Exon 7 of human tafazzin is essential for catalysis (PubMed:19700766).</text>
</comment>
<comment type="function">
    <molecule>Isoform 1</molecule>
    <text evidence="7 10">Catalyzes the transacylation between lysophosphatidate (such as 1-acyl-sn-glycero-3-phosphate) and phosphatidylglycerol (1,2-diacyl-sn-glycero-3-phospho-(1'-sn-glycerol)) (PubMed:19700766). Contributes to cardiolipin (1',3'-bis-[1,2-diacyl-sn-glycero-3-phospho]-glycerol or CL) remodeling (PubMed:12930833, PubMed:19700766).</text>
</comment>
<comment type="function">
    <molecule>Isoform 3</molecule>
    <text evidence="7 9 10">Catalyzes the transacylation between lysophospholipids and phospholipids, and plays a fundamental role in cardiolipin (1',3'-bis-[1,2-diacyl-sn-glycero-3-phospho]-glycerol or CL) metabolism and remodeling.</text>
</comment>
<comment type="function">
    <molecule>Isoform 5</molecule>
    <text evidence="7 10">Catalytically inactive.</text>
</comment>
<comment type="function">
    <molecule>Isoform 7</molecule>
    <text evidence="10">Catalytically inactive.</text>
</comment>
<comment type="catalytic activity">
    <molecule>Isoform 1</molecule>
    <reaction evidence="10">
        <text>a 1-acyl-sn-glycero-3-phosphate + a 1,2-diacyl-sn-glycero-3-phospho-(1'-sn-glycerol) = 1-acyl-sn-glycero-3-phospho-(1'-sn-glycerol) + a 1,2-diacyl-sn-glycero-3-phosphate</text>
        <dbReference type="Rhea" id="RHEA:67748"/>
        <dbReference type="ChEBI" id="CHEBI:57970"/>
        <dbReference type="ChEBI" id="CHEBI:58608"/>
        <dbReference type="ChEBI" id="CHEBI:64716"/>
        <dbReference type="ChEBI" id="CHEBI:64840"/>
    </reaction>
    <physiologicalReaction direction="left-to-right" evidence="10">
        <dbReference type="Rhea" id="RHEA:67749"/>
    </physiologicalReaction>
    <physiologicalReaction direction="right-to-left" evidence="29">
        <dbReference type="Rhea" id="RHEA:67750"/>
    </physiologicalReaction>
</comment>
<comment type="catalytic activity">
    <molecule>Isoform 3</molecule>
    <reaction evidence="10">
        <text>a 1-acyl-sn-glycero-3-phosphate + a 1,2-diacyl-sn-glycero-3-phospho-(1'-sn-glycerol) = 1-acyl-sn-glycero-3-phospho-(1'-sn-glycerol) + a 1,2-diacyl-sn-glycero-3-phosphate</text>
        <dbReference type="Rhea" id="RHEA:67748"/>
        <dbReference type="ChEBI" id="CHEBI:57970"/>
        <dbReference type="ChEBI" id="CHEBI:58608"/>
        <dbReference type="ChEBI" id="CHEBI:64716"/>
        <dbReference type="ChEBI" id="CHEBI:64840"/>
    </reaction>
    <physiologicalReaction direction="left-to-right" evidence="10">
        <dbReference type="Rhea" id="RHEA:67749"/>
    </physiologicalReaction>
    <physiologicalReaction direction="right-to-left" evidence="29">
        <dbReference type="Rhea" id="RHEA:67750"/>
    </physiologicalReaction>
</comment>
<comment type="catalytic activity">
    <molecule>Isoform 1</molecule>
    <reaction evidence="10">
        <text>1-hexadecanoyl-2-(9Z,12Z-octadecadienoyl)-sn-glycero-3-phospho-(1'-sn-glycerol) + 1-(9Z-octadecenoyl)-sn-glycero-3-phosphate = 1-(9Z)-octadecenoyl-2-(9Z,12Z)-octadecadienoyl-sn-glycero-3-phosphate + 1-hexadecanoyl-sn-glycero-3-phospho-(1'-sn-glycerol)</text>
        <dbReference type="Rhea" id="RHEA:67752"/>
        <dbReference type="ChEBI" id="CHEBI:72840"/>
        <dbReference type="ChEBI" id="CHEBI:74544"/>
        <dbReference type="ChEBI" id="CHEBI:74563"/>
        <dbReference type="ChEBI" id="CHEBI:75158"/>
    </reaction>
    <physiologicalReaction direction="left-to-right" evidence="10">
        <dbReference type="Rhea" id="RHEA:67753"/>
    </physiologicalReaction>
    <physiologicalReaction direction="right-to-left" evidence="29">
        <dbReference type="Rhea" id="RHEA:67754"/>
    </physiologicalReaction>
</comment>
<comment type="catalytic activity">
    <molecule>Isoform 3</molecule>
    <reaction evidence="10">
        <text>1-hexadecanoyl-2-(9Z,12Z-octadecadienoyl)-sn-glycero-3-phospho-(1'-sn-glycerol) + 1-(9Z-octadecenoyl)-sn-glycero-3-phosphate = 1-(9Z)-octadecenoyl-2-(9Z,12Z)-octadecadienoyl-sn-glycero-3-phosphate + 1-hexadecanoyl-sn-glycero-3-phospho-(1'-sn-glycerol)</text>
        <dbReference type="Rhea" id="RHEA:67752"/>
        <dbReference type="ChEBI" id="CHEBI:72840"/>
        <dbReference type="ChEBI" id="CHEBI:74544"/>
        <dbReference type="ChEBI" id="CHEBI:74563"/>
        <dbReference type="ChEBI" id="CHEBI:75158"/>
    </reaction>
    <physiologicalReaction direction="left-to-right" evidence="10">
        <dbReference type="Rhea" id="RHEA:67753"/>
    </physiologicalReaction>
    <physiologicalReaction direction="right-to-left" evidence="29">
        <dbReference type="Rhea" id="RHEA:67754"/>
    </physiologicalReaction>
</comment>
<comment type="catalytic activity">
    <molecule>Isoform 3</molecule>
    <reaction evidence="29">
        <text>1-hexadecanoyl-2-(9Z,12Z-octadecadienoyl)-sn-glycero-3-phosphocholine + 1-hexadecanoyl-sn-glycero-3-phosphocholine = 2-(9Z,12Z-octadecadienoyl)-sn-glycero-3-phosphocholine + 1,2-dihexadecanoyl-sn-glycero-3-phosphocholine</text>
        <dbReference type="Rhea" id="RHEA:68988"/>
        <dbReference type="ChEBI" id="CHEBI:72998"/>
        <dbReference type="ChEBI" id="CHEBI:72999"/>
        <dbReference type="ChEBI" id="CHEBI:73002"/>
        <dbReference type="ChEBI" id="CHEBI:76084"/>
    </reaction>
    <physiologicalReaction direction="left-to-right" evidence="29">
        <dbReference type="Rhea" id="RHEA:68989"/>
    </physiologicalReaction>
    <physiologicalReaction direction="right-to-left" evidence="29">
        <dbReference type="Rhea" id="RHEA:68990"/>
    </physiologicalReaction>
</comment>
<comment type="catalytic activity">
    <molecule>Isoform 3</molecule>
    <reaction evidence="29">
        <text>1,2-di-(9Z-octadecenoyl)-sn-glycero-3-phosphocholine + 1-hexadecanoyl-sn-glycero-3-phosphocholine = 1-hexadecanoyl-2-(9Z-octadecenoyl)-sn-glycero-3-phosphocholine + 1-(9Z-octadecenoyl)-sn-glycero-3-phosphocholine</text>
        <dbReference type="Rhea" id="RHEA:43816"/>
        <dbReference type="ChEBI" id="CHEBI:28610"/>
        <dbReference type="ChEBI" id="CHEBI:72998"/>
        <dbReference type="ChEBI" id="CHEBI:73001"/>
        <dbReference type="ChEBI" id="CHEBI:74669"/>
    </reaction>
    <physiologicalReaction direction="left-to-right" evidence="29">
        <dbReference type="Rhea" id="RHEA:43817"/>
    </physiologicalReaction>
    <physiologicalReaction direction="right-to-left" evidence="29">
        <dbReference type="Rhea" id="RHEA:43818"/>
    </physiologicalReaction>
</comment>
<comment type="catalytic activity">
    <molecule>Isoform 3</molecule>
    <reaction evidence="27 28">
        <text>1'-[1,2-diacyl-sn-glycero-3-phospho],3'-[1-acyl-sn-glycero-3-phospho]-glycerol + a 1,2-diacyl-sn-glycero-3-phosphocholine = a cardiolipin + a 1-acyl-sn-glycero-3-phosphocholine</text>
        <dbReference type="Rhea" id="RHEA:33731"/>
        <dbReference type="ChEBI" id="CHEBI:57643"/>
        <dbReference type="ChEBI" id="CHEBI:58168"/>
        <dbReference type="ChEBI" id="CHEBI:62237"/>
        <dbReference type="ChEBI" id="CHEBI:64743"/>
    </reaction>
    <physiologicalReaction direction="left-to-right" evidence="27 28">
        <dbReference type="Rhea" id="RHEA:33732"/>
    </physiologicalReaction>
    <physiologicalReaction direction="right-to-left" evidence="27 28">
        <dbReference type="Rhea" id="RHEA:33733"/>
    </physiologicalReaction>
</comment>
<comment type="pathway">
    <text evidence="27 29">Phospholipid metabolism.</text>
</comment>
<comment type="subunit">
    <text evidence="10 12 13">Associates with multiple protein complexes.</text>
</comment>
<comment type="subcellular location">
    <subcellularLocation>
        <location evidence="13">Mitochondrion outer membrane</location>
        <topology evidence="30">Peripheral membrane protein</topology>
        <orientation evidence="30">Intermembrane side</orientation>
    </subcellularLocation>
    <subcellularLocation>
        <location evidence="13">Mitochondrion inner membrane</location>
        <topology evidence="30">Peripheral membrane protein</topology>
        <orientation evidence="30">Intermembrane side</orientation>
    </subcellularLocation>
</comment>
<comment type="subcellular location">
    <molecule>Isoform 1</molecule>
    <subcellularLocation>
        <location evidence="10 14">Mitochondrion membrane</location>
    </subcellularLocation>
</comment>
<comment type="subcellular location">
    <molecule>Isoform 2</molecule>
    <subcellularLocation>
        <location evidence="26">Cytoplasm</location>
    </subcellularLocation>
</comment>
<comment type="subcellular location">
    <molecule>Isoform 3</molecule>
    <subcellularLocation>
        <location evidence="10 14">Mitochondrion membrane</location>
    </subcellularLocation>
</comment>
<comment type="subcellular location">
    <molecule>Isoform 5</molecule>
    <subcellularLocation>
        <location evidence="10">Mitochondrion membrane</location>
    </subcellularLocation>
</comment>
<comment type="subcellular location">
    <molecule>Isoform 6</molecule>
    <subcellularLocation>
        <location evidence="26">Cytoplasm</location>
    </subcellularLocation>
</comment>
<comment type="subcellular location">
    <molecule>Isoform 7</molecule>
    <subcellularLocation>
        <location evidence="10">Mitochondrion membrane</location>
    </subcellularLocation>
</comment>
<comment type="subcellular location">
    <molecule>Isoform 8</molecule>
    <subcellularLocation>
        <location evidence="26">Cytoplasm</location>
    </subcellularLocation>
</comment>
<comment type="subcellular location">
    <molecule>Isoform 9</molecule>
    <subcellularLocation>
        <location evidence="26">Cytoplasm</location>
    </subcellularLocation>
</comment>
<comment type="alternative products">
    <event type="alternative splicing"/>
    <isoform>
        <id>Q16635-3</id>
        <name>3</name>
        <name>Del_exon_5</name>
        <name evidence="20">TAZ-delta5</name>
        <name evidence="19">Exon-5-deleted</name>
        <sequence type="displayed"/>
    </isoform>
    <isoform>
        <id>Q16635-1</id>
        <name>1</name>
        <name evidence="20">TAZ-FL</name>
        <name evidence="19">Full-length</name>
        <sequence type="described" ref="VSP_061366"/>
    </isoform>
    <isoform>
        <id>Q16635-2</id>
        <name>2</name>
        <name>Short</name>
        <sequence type="described" ref="VSP_061365 VSP_061366"/>
    </isoform>
    <isoform>
        <id>Q16635-4</id>
        <name>4</name>
        <name>Del_exon_6</name>
        <sequence type="described" ref="VSP_061367"/>
    </isoform>
    <isoform>
        <id>Q16635-5</id>
        <name>5</name>
        <name>Del_exon_7</name>
        <name evidence="20">TAZ-delta7</name>
        <name evidence="19">Exon-7-deleted</name>
        <sequence type="described" ref="VSP_061366 VSP_061368"/>
    </isoform>
    <isoform>
        <id>Q16635-6</id>
        <name>6</name>
        <sequence type="described" ref="VSP_061365 VSP_061366 VSP_061368"/>
    </isoform>
    <isoform>
        <id>Q16635-7</id>
        <name>7</name>
        <name evidence="20">TAZ-delta5-delta7</name>
        <name evidence="19">Exons-5+7-deleted</name>
        <sequence type="described" ref="VSP_061368"/>
    </isoform>
    <isoform>
        <id>Q16635-8</id>
        <name>8</name>
        <sequence type="described" ref="VSP_061365"/>
    </isoform>
    <isoform>
        <id>Q16635-9</id>
        <name>9</name>
        <sequence type="described" ref="VSP_061365 VSP_061368"/>
    </isoform>
</comment>
<comment type="tissue specificity">
    <text>High levels in cardiac and skeletal muscle. Up to 10 isoforms can be present in different amounts in different tissues. Most isoforms are ubiquitous. Isoforms that lack the N-terminus are found in leukocytes and fibroblasts, but not in heart and skeletal muscle. Some forms appear restricted to cardiac and skeletal muscle or to leukocytes.</text>
</comment>
<comment type="domain">
    <text evidence="2">The HXXXXD motif is essential for acyltransferase activity.</text>
</comment>
<comment type="disease" evidence="5 6 11 13 14 16 17">
    <disease id="DI-00005">
        <name>Barth syndrome</name>
        <acronym>BTHS</acronym>
        <description>An X-linked disease characterized by dilated cardiomyopathy with endocardial fibroelastosis, a predominantly proximal skeletal myopathy, growth retardation, neutropenia, and organic aciduria, particularly excess of 3-methylglutaconic acid. Additional features include hypertrophic cardiomyopathy, isolated left ventricular non-compaction, ventricular arrhythmia, motor delay, poor appetite, fatigue and exercise intolerance, hypoglycemia, lactic acidosis, hyperammonemia, and dramatic late catch-up growth after growth delay throughout childhood.</description>
        <dbReference type="MIM" id="302060"/>
    </disease>
    <text>The disease is caused by variants affecting the gene represented in this entry.</text>
</comment>
<comment type="miscellaneous">
    <text evidence="25">The enzyme was named after a masochistic character Tafazzi, once popular on Italian television, apparently due to the difficulty encountered for its identification and characterization.</text>
</comment>
<comment type="similarity">
    <text evidence="26">Belongs to the taffazin family.</text>
</comment>
<comment type="online information" name="The TAZ gene homepage">
    <link uri="https://databases.lovd.nl/shared/genes/TAZ"/>
    <text>Global Variome shared LOVD TAZ (tafazzin)</text>
</comment>
<comment type="online information" name="The Barth syndrome foundation">
    <link uri="https://www.barthsyndrome.org/"/>
</comment>
<dbReference type="EC" id="2.3.1.-" evidence="10"/>
<dbReference type="EMBL" id="X92763">
    <property type="protein sequence ID" value="CAA63419.1"/>
    <property type="molecule type" value="Genomic_DNA"/>
</dbReference>
<dbReference type="EMBL" id="X92764">
    <property type="protein sequence ID" value="CAA63419.1"/>
    <property type="status" value="JOINED"/>
    <property type="molecule type" value="Genomic_DNA"/>
</dbReference>
<dbReference type="EMBL" id="X92762">
    <property type="protein sequence ID" value="CAA63418.1"/>
    <property type="molecule type" value="mRNA"/>
</dbReference>
<dbReference type="EMBL" id="AY231461">
    <property type="protein sequence ID" value="AAO84335.1"/>
    <property type="molecule type" value="mRNA"/>
</dbReference>
<dbReference type="EMBL" id="AY231462">
    <property type="protein sequence ID" value="AAO84336.1"/>
    <property type="molecule type" value="mRNA"/>
</dbReference>
<dbReference type="EMBL" id="AY231463">
    <property type="protein sequence ID" value="AAO84337.1"/>
    <property type="molecule type" value="mRNA"/>
</dbReference>
<dbReference type="EMBL" id="AY231464">
    <property type="protein sequence ID" value="AAO84338.1"/>
    <property type="molecule type" value="mRNA"/>
</dbReference>
<dbReference type="EMBL" id="AY258036">
    <property type="protein sequence ID" value="AAO84339.1"/>
    <property type="molecule type" value="mRNA"/>
</dbReference>
<dbReference type="EMBL" id="AY258037">
    <property type="protein sequence ID" value="AAO84340.1"/>
    <property type="molecule type" value="mRNA"/>
</dbReference>
<dbReference type="EMBL" id="AY258038">
    <property type="protein sequence ID" value="AAO84341.1"/>
    <property type="molecule type" value="mRNA"/>
</dbReference>
<dbReference type="EMBL" id="AY258039">
    <property type="protein sequence ID" value="AAO84342.1"/>
    <property type="molecule type" value="mRNA"/>
</dbReference>
<dbReference type="EMBL" id="AK291848">
    <property type="protein sequence ID" value="BAF84537.1"/>
    <property type="molecule type" value="mRNA"/>
</dbReference>
<dbReference type="EMBL" id="BX936347">
    <property type="protein sequence ID" value="CAI43207.1"/>
    <property type="molecule type" value="Genomic_DNA"/>
</dbReference>
<dbReference type="EMBL" id="BX936347">
    <property type="protein sequence ID" value="CAI43208.1"/>
    <property type="molecule type" value="Genomic_DNA"/>
</dbReference>
<dbReference type="EMBL" id="BX936347">
    <property type="protein sequence ID" value="CAI43209.1"/>
    <property type="molecule type" value="Genomic_DNA"/>
</dbReference>
<dbReference type="EMBL" id="BX936347">
    <property type="protein sequence ID" value="CAI43211.1"/>
    <property type="molecule type" value="Genomic_DNA"/>
</dbReference>
<dbReference type="EMBL" id="BX936347">
    <property type="protein sequence ID" value="CAM45851.1"/>
    <property type="molecule type" value="Genomic_DNA"/>
</dbReference>
<dbReference type="EMBL" id="CH471172">
    <property type="protein sequence ID" value="EAW72720.1"/>
    <property type="molecule type" value="Genomic_DNA"/>
</dbReference>
<dbReference type="EMBL" id="CH471172">
    <property type="protein sequence ID" value="EAW72728.1"/>
    <property type="molecule type" value="Genomic_DNA"/>
</dbReference>
<dbReference type="CCDS" id="CCDS14748.1">
    <molecule id="Q16635-1"/>
</dbReference>
<dbReference type="CCDS" id="CCDS14749.1">
    <molecule id="Q16635-3"/>
</dbReference>
<dbReference type="CCDS" id="CCDS14750.1">
    <molecule id="Q16635-5"/>
</dbReference>
<dbReference type="CCDS" id="CCDS35450.1">
    <molecule id="Q16635-7"/>
</dbReference>
<dbReference type="RefSeq" id="NP_000107.1">
    <molecule id="Q16635-1"/>
    <property type="nucleotide sequence ID" value="NM_000116.5"/>
</dbReference>
<dbReference type="RefSeq" id="NP_001290394.1">
    <property type="nucleotide sequence ID" value="NM_001303465.1"/>
</dbReference>
<dbReference type="RefSeq" id="NP_851828.1">
    <molecule id="Q16635-3"/>
    <property type="nucleotide sequence ID" value="NM_181311.4"/>
</dbReference>
<dbReference type="RefSeq" id="NP_851829.1">
    <molecule id="Q16635-5"/>
    <property type="nucleotide sequence ID" value="NM_181312.4"/>
</dbReference>
<dbReference type="RefSeq" id="NP_851830.1">
    <molecule id="Q16635-7"/>
    <property type="nucleotide sequence ID" value="NM_181313.4"/>
</dbReference>
<dbReference type="SMR" id="Q16635"/>
<dbReference type="BioGRID" id="112764">
    <property type="interactions" value="217"/>
</dbReference>
<dbReference type="FunCoup" id="Q16635">
    <property type="interactions" value="1352"/>
</dbReference>
<dbReference type="IntAct" id="Q16635">
    <property type="interactions" value="150"/>
</dbReference>
<dbReference type="MINT" id="Q16635"/>
<dbReference type="STRING" id="9606.ENSP00000469981"/>
<dbReference type="BindingDB" id="Q16635"/>
<dbReference type="ChEMBL" id="CHEMBL5291574"/>
<dbReference type="iPTMnet" id="Q16635"/>
<dbReference type="PhosphoSitePlus" id="Q16635"/>
<dbReference type="BioMuta" id="TAZ"/>
<dbReference type="DMDM" id="2498992"/>
<dbReference type="jPOST" id="Q16635"/>
<dbReference type="MassIVE" id="Q16635"/>
<dbReference type="PaxDb" id="9606-ENSP00000469981"/>
<dbReference type="PeptideAtlas" id="Q16635"/>
<dbReference type="ProteomicsDB" id="60983">
    <molecule id="Q16635-1"/>
</dbReference>
<dbReference type="ProteomicsDB" id="60984">
    <molecule id="Q16635-2"/>
</dbReference>
<dbReference type="ProteomicsDB" id="60985">
    <molecule id="Q16635-3"/>
</dbReference>
<dbReference type="ProteomicsDB" id="60986">
    <molecule id="Q16635-4"/>
</dbReference>
<dbReference type="ProteomicsDB" id="60987">
    <molecule id="Q16635-5"/>
</dbReference>
<dbReference type="ProteomicsDB" id="60988">
    <molecule id="Q16635-6"/>
</dbReference>
<dbReference type="ProteomicsDB" id="60989">
    <molecule id="Q16635-7"/>
</dbReference>
<dbReference type="ProteomicsDB" id="60990">
    <molecule id="Q16635-8"/>
</dbReference>
<dbReference type="ProteomicsDB" id="60991">
    <molecule id="Q16635-9"/>
</dbReference>
<dbReference type="Pumba" id="Q16635"/>
<dbReference type="ABCD" id="Q16635">
    <property type="antibodies" value="1 sequenced antibody"/>
</dbReference>
<dbReference type="Antibodypedia" id="31212">
    <property type="antibodies" value="451 antibodies from 36 providers"/>
</dbReference>
<dbReference type="DNASU" id="6901"/>
<dbReference type="Ensembl" id="ENST00000601016.6">
    <molecule id="Q16635-1"/>
    <property type="protein sequence ID" value="ENSP00000469981.1"/>
    <property type="gene ID" value="ENSG00000102125.17"/>
</dbReference>
<dbReference type="Ensembl" id="ENST00000612012.5">
    <molecule id="Q16635-5"/>
    <property type="protein sequence ID" value="ENSP00000482070.2"/>
    <property type="gene ID" value="ENSG00000102125.17"/>
</dbReference>
<dbReference type="Ensembl" id="ENST00000612460.5">
    <molecule id="Q16635-3"/>
    <property type="protein sequence ID" value="ENSP00000481037.1"/>
    <property type="gene ID" value="ENSG00000102125.17"/>
</dbReference>
<dbReference type="Ensembl" id="ENST00000613002.4">
    <molecule id="Q16635-7"/>
    <property type="protein sequence ID" value="ENSP00000478154.1"/>
    <property type="gene ID" value="ENSG00000102125.17"/>
</dbReference>
<dbReference type="GeneID" id="6901"/>
<dbReference type="KEGG" id="hsa:6901"/>
<dbReference type="MANE-Select" id="ENST00000601016.6">
    <molecule id="Q16635-1"/>
    <property type="protein sequence ID" value="ENSP00000469981.1"/>
    <property type="RefSeq nucleotide sequence ID" value="NM_000116.5"/>
    <property type="RefSeq protein sequence ID" value="NP_000107.1"/>
</dbReference>
<dbReference type="UCSC" id="uc033fbm.2">
    <molecule id="Q16635-3"/>
    <property type="organism name" value="human"/>
</dbReference>
<dbReference type="AGR" id="HGNC:11577"/>
<dbReference type="CTD" id="6901"/>
<dbReference type="DisGeNET" id="6901"/>
<dbReference type="GeneCards" id="TAFAZZIN"/>
<dbReference type="GeneReviews" id="TAFAZZIN"/>
<dbReference type="HGNC" id="HGNC:11577">
    <property type="gene designation" value="TAFAZZIN"/>
</dbReference>
<dbReference type="HPA" id="ENSG00000102125">
    <property type="expression patterns" value="Low tissue specificity"/>
</dbReference>
<dbReference type="MalaCards" id="TAFAZZIN"/>
<dbReference type="MIM" id="300394">
    <property type="type" value="gene"/>
</dbReference>
<dbReference type="MIM" id="302060">
    <property type="type" value="phenotype"/>
</dbReference>
<dbReference type="neXtProt" id="NX_Q16635"/>
<dbReference type="OpenTargets" id="ENSG00000102125"/>
<dbReference type="Orphanet" id="111">
    <property type="disease" value="Barth syndrome"/>
</dbReference>
<dbReference type="Orphanet" id="154">
    <property type="disease" value="Familial isolated dilated cardiomyopathy"/>
</dbReference>
<dbReference type="VEuPathDB" id="HostDB:ENSG00000102125"/>
<dbReference type="eggNOG" id="KOG2847">
    <property type="taxonomic scope" value="Eukaryota"/>
</dbReference>
<dbReference type="GeneTree" id="ENSGT00390000018621"/>
<dbReference type="InParanoid" id="Q16635"/>
<dbReference type="PAN-GO" id="Q16635">
    <property type="GO annotations" value="4 GO annotations based on evolutionary models"/>
</dbReference>
<dbReference type="PhylomeDB" id="Q16635"/>
<dbReference type="TreeFam" id="TF313862"/>
<dbReference type="PathwayCommons" id="Q16635"/>
<dbReference type="Reactome" id="R-HSA-1268020">
    <property type="pathway name" value="Mitochondrial protein import"/>
</dbReference>
<dbReference type="Reactome" id="R-HSA-1482798">
    <property type="pathway name" value="Acyl chain remodeling of CL"/>
</dbReference>
<dbReference type="SignaLink" id="Q16635"/>
<dbReference type="BioGRID-ORCS" id="6901">
    <property type="hits" value="148 hits in 801 CRISPR screens"/>
</dbReference>
<dbReference type="ChiTaRS" id="TAZ">
    <property type="organism name" value="human"/>
</dbReference>
<dbReference type="GeneWiki" id="Tafazzin"/>
<dbReference type="GenomeRNAi" id="6901"/>
<dbReference type="Pharos" id="Q16635">
    <property type="development level" value="Tbio"/>
</dbReference>
<dbReference type="PRO" id="PR:Q16635"/>
<dbReference type="Proteomes" id="UP000005640">
    <property type="component" value="Chromosome X"/>
</dbReference>
<dbReference type="RNAct" id="Q16635">
    <property type="molecule type" value="protein"/>
</dbReference>
<dbReference type="Bgee" id="ENSG00000102125">
    <property type="expression patterns" value="Expressed in apex of heart and 163 other cell types or tissues"/>
</dbReference>
<dbReference type="ExpressionAtlas" id="Q16635">
    <property type="expression patterns" value="baseline and differential"/>
</dbReference>
<dbReference type="GO" id="GO:0005743">
    <property type="term" value="C:mitochondrial inner membrane"/>
    <property type="evidence" value="ECO:0000304"/>
    <property type="project" value="Reactome"/>
</dbReference>
<dbReference type="GO" id="GO:0005758">
    <property type="term" value="C:mitochondrial intermembrane space"/>
    <property type="evidence" value="ECO:0000314"/>
    <property type="project" value="UniProtKB"/>
</dbReference>
<dbReference type="GO" id="GO:0031966">
    <property type="term" value="C:mitochondrial membrane"/>
    <property type="evidence" value="ECO:0000318"/>
    <property type="project" value="GO_Central"/>
</dbReference>
<dbReference type="GO" id="GO:0005741">
    <property type="term" value="C:mitochondrial outer membrane"/>
    <property type="evidence" value="ECO:0007669"/>
    <property type="project" value="UniProtKB-SubCell"/>
</dbReference>
<dbReference type="GO" id="GO:0005739">
    <property type="term" value="C:mitochondrion"/>
    <property type="evidence" value="ECO:0000314"/>
    <property type="project" value="BHF-UCL"/>
</dbReference>
<dbReference type="GO" id="GO:0003841">
    <property type="term" value="F:1-acylglycerol-3-phosphate O-acyltransferase activity"/>
    <property type="evidence" value="ECO:0000304"/>
    <property type="project" value="Reactome"/>
</dbReference>
<dbReference type="GO" id="GO:0047184">
    <property type="term" value="F:1-acylglycerophosphocholine O-acyltransferase activity"/>
    <property type="evidence" value="ECO:0000314"/>
    <property type="project" value="BHF-UCL"/>
</dbReference>
<dbReference type="GO" id="GO:0008374">
    <property type="term" value="F:O-acyltransferase activity"/>
    <property type="evidence" value="ECO:0000304"/>
    <property type="project" value="Reactome"/>
</dbReference>
<dbReference type="GO" id="GO:0035965">
    <property type="term" value="P:cardiolipin acyl-chain remodeling"/>
    <property type="evidence" value="ECO:0000314"/>
    <property type="project" value="UniProtKB"/>
</dbReference>
<dbReference type="GO" id="GO:0042407">
    <property type="term" value="P:cristae formation"/>
    <property type="evidence" value="ECO:0000315"/>
    <property type="project" value="BHF-UCL"/>
</dbReference>
<dbReference type="GO" id="GO:0007007">
    <property type="term" value="P:inner mitochondrial membrane organization"/>
    <property type="evidence" value="ECO:0000318"/>
    <property type="project" value="GO_Central"/>
</dbReference>
<dbReference type="GO" id="GO:2001171">
    <property type="term" value="P:positive regulation of ATP biosynthetic process"/>
    <property type="evidence" value="ECO:0007669"/>
    <property type="project" value="Ensembl"/>
</dbReference>
<dbReference type="GO" id="GO:1900210">
    <property type="term" value="P:positive regulation of cardiolipin metabolic process"/>
    <property type="evidence" value="ECO:0007669"/>
    <property type="project" value="Ensembl"/>
</dbReference>
<dbReference type="CDD" id="cd07989">
    <property type="entry name" value="LPLAT_AGPAT-like"/>
    <property type="match status" value="1"/>
</dbReference>
<dbReference type="InterPro" id="IPR002123">
    <property type="entry name" value="Plipid/glycerol_acylTrfase"/>
</dbReference>
<dbReference type="InterPro" id="IPR000872">
    <property type="entry name" value="Tafazzin"/>
</dbReference>
<dbReference type="PANTHER" id="PTHR12497:SF0">
    <property type="entry name" value="TAFAZZIN"/>
    <property type="match status" value="1"/>
</dbReference>
<dbReference type="PANTHER" id="PTHR12497">
    <property type="entry name" value="TAZ PROTEIN TAFAZZIN"/>
    <property type="match status" value="1"/>
</dbReference>
<dbReference type="Pfam" id="PF01553">
    <property type="entry name" value="Acyltransferase"/>
    <property type="match status" value="1"/>
</dbReference>
<dbReference type="PRINTS" id="PR00979">
    <property type="entry name" value="TAFAZZIN"/>
</dbReference>
<dbReference type="SMART" id="SM00563">
    <property type="entry name" value="PlsC"/>
    <property type="match status" value="1"/>
</dbReference>
<dbReference type="SUPFAM" id="SSF69593">
    <property type="entry name" value="Glycerol-3-phosphate (1)-acyltransferase"/>
    <property type="match status" value="1"/>
</dbReference>
<gene>
    <name evidence="31" type="primary">TAFAZZIN</name>
    <name type="synonym">EFE2</name>
    <name evidence="25" type="synonym">G4.5</name>
    <name evidence="18" type="synonym">TAZ</name>
</gene>
<proteinExistence type="evidence at protein level"/>